<organism>
    <name type="scientific">Tolypocladium album</name>
    <name type="common">Soil fungus</name>
    <name type="synonym">Chaunopycnis alba</name>
    <dbReference type="NCBI Taxonomy" id="124418"/>
    <lineage>
        <taxon>Eukaryota</taxon>
        <taxon>Fungi</taxon>
        <taxon>Dikarya</taxon>
        <taxon>Ascomycota</taxon>
        <taxon>Pezizomycotina</taxon>
        <taxon>Sordariomycetes</taxon>
        <taxon>Hypocreomycetidae</taxon>
        <taxon>Hypocreales</taxon>
        <taxon>Ophiocordycipitaceae</taxon>
        <taxon>Tolypocladium</taxon>
    </lineage>
</organism>
<dbReference type="EC" id="1.-.-.-" evidence="3"/>
<dbReference type="EMBL" id="AB725916">
    <property type="protein sequence ID" value="BAM84050.1"/>
    <property type="molecule type" value="Genomic_DNA"/>
</dbReference>
<dbReference type="SMR" id="M1V8K0"/>
<dbReference type="KEGG" id="ag:BAM84050"/>
<dbReference type="GO" id="GO:0016020">
    <property type="term" value="C:membrane"/>
    <property type="evidence" value="ECO:0007669"/>
    <property type="project" value="UniProtKB-SubCell"/>
</dbReference>
<dbReference type="GO" id="GO:0020037">
    <property type="term" value="F:heme binding"/>
    <property type="evidence" value="ECO:0007669"/>
    <property type="project" value="InterPro"/>
</dbReference>
<dbReference type="GO" id="GO:0005506">
    <property type="term" value="F:iron ion binding"/>
    <property type="evidence" value="ECO:0007669"/>
    <property type="project" value="InterPro"/>
</dbReference>
<dbReference type="GO" id="GO:0004497">
    <property type="term" value="F:monooxygenase activity"/>
    <property type="evidence" value="ECO:0007669"/>
    <property type="project" value="UniProtKB-KW"/>
</dbReference>
<dbReference type="GO" id="GO:0016705">
    <property type="term" value="F:oxidoreductase activity, acting on paired donors, with incorporation or reduction of molecular oxygen"/>
    <property type="evidence" value="ECO:0007669"/>
    <property type="project" value="InterPro"/>
</dbReference>
<dbReference type="GO" id="GO:0019748">
    <property type="term" value="P:secondary metabolic process"/>
    <property type="evidence" value="ECO:0007669"/>
    <property type="project" value="UniProtKB-ARBA"/>
</dbReference>
<dbReference type="CDD" id="cd11041">
    <property type="entry name" value="CYP503A1-like"/>
    <property type="match status" value="1"/>
</dbReference>
<dbReference type="Gene3D" id="1.10.630.10">
    <property type="entry name" value="Cytochrome P450"/>
    <property type="match status" value="1"/>
</dbReference>
<dbReference type="InterPro" id="IPR001128">
    <property type="entry name" value="Cyt_P450"/>
</dbReference>
<dbReference type="InterPro" id="IPR002403">
    <property type="entry name" value="Cyt_P450_E_grp-IV"/>
</dbReference>
<dbReference type="InterPro" id="IPR036396">
    <property type="entry name" value="Cyt_P450_sf"/>
</dbReference>
<dbReference type="PANTHER" id="PTHR46206">
    <property type="entry name" value="CYTOCHROME P450"/>
    <property type="match status" value="1"/>
</dbReference>
<dbReference type="PANTHER" id="PTHR46206:SF7">
    <property type="entry name" value="P450, PUTATIVE (EUROFUNG)-RELATED"/>
    <property type="match status" value="1"/>
</dbReference>
<dbReference type="Pfam" id="PF00067">
    <property type="entry name" value="p450"/>
    <property type="match status" value="1"/>
</dbReference>
<dbReference type="PRINTS" id="PR00465">
    <property type="entry name" value="EP450IV"/>
</dbReference>
<dbReference type="SUPFAM" id="SSF48264">
    <property type="entry name" value="Cytochrome P450"/>
    <property type="match status" value="1"/>
</dbReference>
<evidence type="ECO:0000250" key="1">
    <source>
        <dbReference type="UniProtKB" id="P04798"/>
    </source>
</evidence>
<evidence type="ECO:0000255" key="2"/>
<evidence type="ECO:0000269" key="3">
    <source>
    </source>
</evidence>
<evidence type="ECO:0000303" key="4">
    <source>
    </source>
</evidence>
<evidence type="ECO:0000305" key="5"/>
<evidence type="ECO:0000305" key="6">
    <source>
    </source>
</evidence>
<keyword id="KW-0349">Heme</keyword>
<keyword id="KW-0408">Iron</keyword>
<keyword id="KW-0472">Membrane</keyword>
<keyword id="KW-0479">Metal-binding</keyword>
<keyword id="KW-0503">Monooxygenase</keyword>
<keyword id="KW-0560">Oxidoreductase</keyword>
<keyword id="KW-0812">Transmembrane</keyword>
<keyword id="KW-1133">Transmembrane helix</keyword>
<proteinExistence type="evidence at protein level"/>
<comment type="function">
    <text evidence="3 6">Cytochrome P450 monooxygeanse; part of the gene cluster that mediates the biosynthesis of terpendoles, indole-diterpene (IDT) mycotoxins including terpendole I, terpendole K, terpendole C, as well as the kinesin Eg5 inhibitor terpendole E (PubMed:23261604). TerP has dual activity and is able to convert terpendole E to 13-desoxyterpendole I and paspaline to 13-desoxypaxilline (PubMed:23261604). Terpendoles biosynthesis begins with the synthesis of geranylgeranyl diphosphate (GGPP) by a yet unidentified GGPP synthase. Condensation of indole-3-glycerol phosphate with GGPP by the prenyltransferase terC then forms 3-geranylgeranylindole (3-GGI), followed by epoxidation and cyclization of this intermediate (by the FAD-dependent monooxygeanse terM and the terpene cyclase terB) to form paspaline. The cytochrome monooxygenase terQ then hydroxylates paspalline at C-11 to yield terpendole E. The cytochrome monooxygenase terP converts terpendole E to 13-desoxyterpendole I, and terQ converts 13-desoxyterpendole I into terpendole I. TerF and terK are required for conversion of terpendole I to terpendole C which is further converted to terpendole K (Probable).</text>
</comment>
<comment type="cofactor">
    <cofactor evidence="1">
        <name>heme</name>
        <dbReference type="ChEBI" id="CHEBI:30413"/>
    </cofactor>
</comment>
<comment type="pathway">
    <text evidence="3">Secondary metabolite biosynthesis.</text>
</comment>
<comment type="subcellular location">
    <subcellularLocation>
        <location evidence="2">Membrane</location>
        <topology evidence="2">Single-pass membrane protein</topology>
    </subcellularLocation>
</comment>
<comment type="disruption phenotype">
    <text evidence="3">Leads to the accumulation of terpendole E.</text>
</comment>
<comment type="similarity">
    <text evidence="5">Belongs to the cytochrome P450 family.</text>
</comment>
<sequence>MPSLLLSLLLLQVPIICAWLLVRFIIDLTGKNGTIPTIRRWPALFPEFLDRLSYNDNAAQLVEEGYRKYKDRPFRLLKMDMDLVVIPLKYATELRAITSDKLDPLTASFDDNAGELTGILLGSELHSDAIHRRLTPGLRIPSTKYCRILTVCAFPERVGYLTDVIGNWTPVIPYELVLRLSTRAAARVFVGETICRDEVFLETCSSFSRNTFDTIATFRNLGKTIGFMLGILTPSVRKAREQGAYVQKLLGSEVERRRACPDEKHDDFLQWCIDLARTEQEAKPEALATRTIGILSMAVVHTTAMATTHMLFDLLADSKLRETLKKEQEDVLPSGWDGIDQNSMLKMRLLDSLMRESQRINPVGEFTFRRVVRKPITLSDGYQLRRGQQIAISARRINMDGATLEDAQTFCPSRWAQETQGASFSHSSSSNLHFGLGRYACPGRFFASYMIKAITSRILLEYDFKLESGREGYRPPNSIQGDKILPNRDAVVLFRRREVSI</sequence>
<feature type="chain" id="PRO_0000460266" description="Cytochrome P450 monooxygeanse terP">
    <location>
        <begin position="1"/>
        <end position="501"/>
    </location>
</feature>
<feature type="transmembrane region" description="Helical" evidence="2">
    <location>
        <begin position="2"/>
        <end position="22"/>
    </location>
</feature>
<feature type="binding site" description="axial binding residue" evidence="1">
    <location>
        <position position="441"/>
    </location>
    <ligand>
        <name>heme</name>
        <dbReference type="ChEBI" id="CHEBI:30413"/>
    </ligand>
    <ligandPart>
        <name>Fe</name>
        <dbReference type="ChEBI" id="CHEBI:18248"/>
    </ligandPart>
</feature>
<gene>
    <name evidence="4" type="primary">terP</name>
</gene>
<reference key="1">
    <citation type="journal article" date="2012" name="Chem. Biol.">
        <title>Terpendole E, a kinesin Eg5 inhibitor, is a key biosynthetic intermediate of indole-diterpenes in the producing fungus Chaunopycnis alba.</title>
        <authorList>
            <person name="Motoyama T."/>
            <person name="Hayashi T."/>
            <person name="Hirota H."/>
            <person name="Ueki M."/>
            <person name="Osada H."/>
        </authorList>
    </citation>
    <scope>NUCLEOTIDE SEQUENCE [GENOMIC DNA]</scope>
    <scope>FUNCTION</scope>
    <scope>DISRUPTION PHENOTYPE</scope>
    <scope>CATALYTIC ACTIVITY</scope>
    <scope>PATHWAY</scope>
    <source>
        <strain>RK99-F33</strain>
    </source>
</reference>
<protein>
    <recommendedName>
        <fullName evidence="4">Cytochrome P450 monooxygeanse terP</fullName>
        <ecNumber evidence="3">1.-.-.-</ecNumber>
    </recommendedName>
    <alternativeName>
        <fullName evidence="4">Terpendoles biosynthesis cluster protein P</fullName>
    </alternativeName>
</protein>
<name>TERP_TOLAL</name>
<accession>M1V8K0</accession>